<name>EFTU_NITV9</name>
<accession>B8DLL9</accession>
<reference key="1">
    <citation type="submission" date="2008-10" db="EMBL/GenBank/DDBJ databases">
        <title>Complete sequence of Desulfovibrio vulgaris str. 'Miyazaki F'.</title>
        <authorList>
            <person name="Lucas S."/>
            <person name="Copeland A."/>
            <person name="Lapidus A."/>
            <person name="Glavina del Rio T."/>
            <person name="Dalin E."/>
            <person name="Tice H."/>
            <person name="Bruce D."/>
            <person name="Goodwin L."/>
            <person name="Pitluck S."/>
            <person name="Sims D."/>
            <person name="Brettin T."/>
            <person name="Detter J.C."/>
            <person name="Han C."/>
            <person name="Larimer F."/>
            <person name="Land M."/>
            <person name="Hauser L."/>
            <person name="Kyrpides N."/>
            <person name="Mikhailova N."/>
            <person name="Hazen T.C."/>
            <person name="Richardson P."/>
        </authorList>
    </citation>
    <scope>NUCLEOTIDE SEQUENCE [LARGE SCALE GENOMIC DNA]</scope>
    <source>
        <strain>DSM 19637 / Miyazaki F</strain>
    </source>
</reference>
<sequence length="397" mass="43281">MGKEKFERKKPHVNIGTIGHIDHGKTTLTAAITKVAGLRGNGKFVAFDEIDKAPEEKERGITIATAHVEYETATRHYAHVDCPGHADYIKNMITGAAQMDGGILVVAATDGPMPQTREHILLARQVGVPYLVVFLNKCDMVDDEELLELVELEVRELLSLYGFPGDDIPVIRGSALKALETDDPNSADAAPVVALLDACDSYIPEPQRDIDKPFLMPIEDVFSISGRGTVVTGRVERGIIKVGEEVEIVGIKDTVKSTCTGVEMFRKLLDQGQAGDNIGALLRGIKREDVERGQVLAAPKSIKPHRKFKAEVYVLSKEEGGRHTPFFSGYRPQFYFRTTDITGIIALADGVEMVMPGDNSTFTVELIAPIAMEQGLRFAIREGGRTVGAGVVSEILE</sequence>
<organism>
    <name type="scientific">Nitratidesulfovibrio vulgaris (strain DSM 19637 / Miyazaki F)</name>
    <name type="common">Desulfovibrio vulgaris</name>
    <dbReference type="NCBI Taxonomy" id="883"/>
    <lineage>
        <taxon>Bacteria</taxon>
        <taxon>Pseudomonadati</taxon>
        <taxon>Thermodesulfobacteriota</taxon>
        <taxon>Desulfovibrionia</taxon>
        <taxon>Desulfovibrionales</taxon>
        <taxon>Desulfovibrionaceae</taxon>
        <taxon>Nitratidesulfovibrio</taxon>
    </lineage>
</organism>
<comment type="function">
    <text evidence="2">GTP hydrolase that promotes the GTP-dependent binding of aminoacyl-tRNA to the A-site of ribosomes during protein biosynthesis.</text>
</comment>
<comment type="catalytic activity">
    <reaction evidence="2">
        <text>GTP + H2O = GDP + phosphate + H(+)</text>
        <dbReference type="Rhea" id="RHEA:19669"/>
        <dbReference type="ChEBI" id="CHEBI:15377"/>
        <dbReference type="ChEBI" id="CHEBI:15378"/>
        <dbReference type="ChEBI" id="CHEBI:37565"/>
        <dbReference type="ChEBI" id="CHEBI:43474"/>
        <dbReference type="ChEBI" id="CHEBI:58189"/>
        <dbReference type="EC" id="3.6.5.3"/>
    </reaction>
    <physiologicalReaction direction="left-to-right" evidence="2">
        <dbReference type="Rhea" id="RHEA:19670"/>
    </physiologicalReaction>
</comment>
<comment type="subunit">
    <text evidence="2">Monomer.</text>
</comment>
<comment type="subcellular location">
    <subcellularLocation>
        <location evidence="2">Cytoplasm</location>
    </subcellularLocation>
</comment>
<comment type="similarity">
    <text evidence="2">Belongs to the TRAFAC class translation factor GTPase superfamily. Classic translation factor GTPase family. EF-Tu/EF-1A subfamily.</text>
</comment>
<evidence type="ECO:0000250" key="1"/>
<evidence type="ECO:0000255" key="2">
    <source>
        <dbReference type="HAMAP-Rule" id="MF_00118"/>
    </source>
</evidence>
<keyword id="KW-0963">Cytoplasm</keyword>
<keyword id="KW-0251">Elongation factor</keyword>
<keyword id="KW-0342">GTP-binding</keyword>
<keyword id="KW-0378">Hydrolase</keyword>
<keyword id="KW-0460">Magnesium</keyword>
<keyword id="KW-0479">Metal-binding</keyword>
<keyword id="KW-0547">Nucleotide-binding</keyword>
<keyword id="KW-0648">Protein biosynthesis</keyword>
<feature type="chain" id="PRO_1000201403" description="Elongation factor Tu">
    <location>
        <begin position="1"/>
        <end position="397"/>
    </location>
</feature>
<feature type="domain" description="tr-type G">
    <location>
        <begin position="10"/>
        <end position="207"/>
    </location>
</feature>
<feature type="region of interest" description="G1" evidence="1">
    <location>
        <begin position="19"/>
        <end position="26"/>
    </location>
</feature>
<feature type="region of interest" description="G2" evidence="1">
    <location>
        <begin position="60"/>
        <end position="64"/>
    </location>
</feature>
<feature type="region of interest" description="G3" evidence="1">
    <location>
        <begin position="81"/>
        <end position="84"/>
    </location>
</feature>
<feature type="region of interest" description="G4" evidence="1">
    <location>
        <begin position="136"/>
        <end position="139"/>
    </location>
</feature>
<feature type="region of interest" description="G5" evidence="1">
    <location>
        <begin position="174"/>
        <end position="176"/>
    </location>
</feature>
<feature type="binding site" evidence="2">
    <location>
        <begin position="19"/>
        <end position="26"/>
    </location>
    <ligand>
        <name>GTP</name>
        <dbReference type="ChEBI" id="CHEBI:37565"/>
    </ligand>
</feature>
<feature type="binding site" evidence="2">
    <location>
        <position position="26"/>
    </location>
    <ligand>
        <name>Mg(2+)</name>
        <dbReference type="ChEBI" id="CHEBI:18420"/>
    </ligand>
</feature>
<feature type="binding site" evidence="2">
    <location>
        <begin position="81"/>
        <end position="85"/>
    </location>
    <ligand>
        <name>GTP</name>
        <dbReference type="ChEBI" id="CHEBI:37565"/>
    </ligand>
</feature>
<feature type="binding site" evidence="2">
    <location>
        <begin position="136"/>
        <end position="139"/>
    </location>
    <ligand>
        <name>GTP</name>
        <dbReference type="ChEBI" id="CHEBI:37565"/>
    </ligand>
</feature>
<dbReference type="EC" id="3.6.5.3" evidence="2"/>
<dbReference type="EMBL" id="CP001197">
    <property type="protein sequence ID" value="ACL08395.1"/>
    <property type="molecule type" value="Genomic_DNA"/>
</dbReference>
<dbReference type="SMR" id="B8DLL9"/>
<dbReference type="STRING" id="883.DvMF_1447"/>
<dbReference type="KEGG" id="dvm:DvMF_1447"/>
<dbReference type="eggNOG" id="COG0050">
    <property type="taxonomic scope" value="Bacteria"/>
</dbReference>
<dbReference type="HOGENOM" id="CLU_007265_0_1_7"/>
<dbReference type="OrthoDB" id="9803139at2"/>
<dbReference type="GO" id="GO:0005829">
    <property type="term" value="C:cytosol"/>
    <property type="evidence" value="ECO:0007669"/>
    <property type="project" value="TreeGrafter"/>
</dbReference>
<dbReference type="GO" id="GO:0005525">
    <property type="term" value="F:GTP binding"/>
    <property type="evidence" value="ECO:0007669"/>
    <property type="project" value="UniProtKB-UniRule"/>
</dbReference>
<dbReference type="GO" id="GO:0003924">
    <property type="term" value="F:GTPase activity"/>
    <property type="evidence" value="ECO:0007669"/>
    <property type="project" value="InterPro"/>
</dbReference>
<dbReference type="GO" id="GO:0003746">
    <property type="term" value="F:translation elongation factor activity"/>
    <property type="evidence" value="ECO:0007669"/>
    <property type="project" value="UniProtKB-UniRule"/>
</dbReference>
<dbReference type="CDD" id="cd01884">
    <property type="entry name" value="EF_Tu"/>
    <property type="match status" value="1"/>
</dbReference>
<dbReference type="CDD" id="cd03697">
    <property type="entry name" value="EFTU_II"/>
    <property type="match status" value="1"/>
</dbReference>
<dbReference type="CDD" id="cd03707">
    <property type="entry name" value="EFTU_III"/>
    <property type="match status" value="1"/>
</dbReference>
<dbReference type="FunFam" id="2.40.30.10:FF:000001">
    <property type="entry name" value="Elongation factor Tu"/>
    <property type="match status" value="1"/>
</dbReference>
<dbReference type="FunFam" id="3.40.50.300:FF:000003">
    <property type="entry name" value="Elongation factor Tu"/>
    <property type="match status" value="1"/>
</dbReference>
<dbReference type="Gene3D" id="3.40.50.300">
    <property type="entry name" value="P-loop containing nucleotide triphosphate hydrolases"/>
    <property type="match status" value="1"/>
</dbReference>
<dbReference type="Gene3D" id="2.40.30.10">
    <property type="entry name" value="Translation factors"/>
    <property type="match status" value="2"/>
</dbReference>
<dbReference type="HAMAP" id="MF_00118_B">
    <property type="entry name" value="EF_Tu_B"/>
    <property type="match status" value="1"/>
</dbReference>
<dbReference type="InterPro" id="IPR041709">
    <property type="entry name" value="EF-Tu_GTP-bd"/>
</dbReference>
<dbReference type="InterPro" id="IPR050055">
    <property type="entry name" value="EF-Tu_GTPase"/>
</dbReference>
<dbReference type="InterPro" id="IPR004161">
    <property type="entry name" value="EFTu-like_2"/>
</dbReference>
<dbReference type="InterPro" id="IPR033720">
    <property type="entry name" value="EFTU_2"/>
</dbReference>
<dbReference type="InterPro" id="IPR031157">
    <property type="entry name" value="G_TR_CS"/>
</dbReference>
<dbReference type="InterPro" id="IPR027417">
    <property type="entry name" value="P-loop_NTPase"/>
</dbReference>
<dbReference type="InterPro" id="IPR005225">
    <property type="entry name" value="Small_GTP-bd"/>
</dbReference>
<dbReference type="InterPro" id="IPR000795">
    <property type="entry name" value="T_Tr_GTP-bd_dom"/>
</dbReference>
<dbReference type="InterPro" id="IPR009000">
    <property type="entry name" value="Transl_B-barrel_sf"/>
</dbReference>
<dbReference type="InterPro" id="IPR009001">
    <property type="entry name" value="Transl_elong_EF1A/Init_IF2_C"/>
</dbReference>
<dbReference type="InterPro" id="IPR004541">
    <property type="entry name" value="Transl_elong_EFTu/EF1A_bac/org"/>
</dbReference>
<dbReference type="InterPro" id="IPR004160">
    <property type="entry name" value="Transl_elong_EFTu/EF1A_C"/>
</dbReference>
<dbReference type="NCBIfam" id="TIGR00485">
    <property type="entry name" value="EF-Tu"/>
    <property type="match status" value="1"/>
</dbReference>
<dbReference type="NCBIfam" id="NF000766">
    <property type="entry name" value="PRK00049.1"/>
    <property type="match status" value="1"/>
</dbReference>
<dbReference type="NCBIfam" id="NF009372">
    <property type="entry name" value="PRK12735.1"/>
    <property type="match status" value="1"/>
</dbReference>
<dbReference type="NCBIfam" id="NF009373">
    <property type="entry name" value="PRK12736.1"/>
    <property type="match status" value="1"/>
</dbReference>
<dbReference type="NCBIfam" id="TIGR00231">
    <property type="entry name" value="small_GTP"/>
    <property type="match status" value="1"/>
</dbReference>
<dbReference type="PANTHER" id="PTHR43721:SF22">
    <property type="entry name" value="ELONGATION FACTOR TU, MITOCHONDRIAL"/>
    <property type="match status" value="1"/>
</dbReference>
<dbReference type="PANTHER" id="PTHR43721">
    <property type="entry name" value="ELONGATION FACTOR TU-RELATED"/>
    <property type="match status" value="1"/>
</dbReference>
<dbReference type="Pfam" id="PF00009">
    <property type="entry name" value="GTP_EFTU"/>
    <property type="match status" value="1"/>
</dbReference>
<dbReference type="Pfam" id="PF03144">
    <property type="entry name" value="GTP_EFTU_D2"/>
    <property type="match status" value="1"/>
</dbReference>
<dbReference type="Pfam" id="PF03143">
    <property type="entry name" value="GTP_EFTU_D3"/>
    <property type="match status" value="1"/>
</dbReference>
<dbReference type="PRINTS" id="PR00315">
    <property type="entry name" value="ELONGATNFCT"/>
</dbReference>
<dbReference type="SUPFAM" id="SSF50465">
    <property type="entry name" value="EF-Tu/eEF-1alpha/eIF2-gamma C-terminal domain"/>
    <property type="match status" value="1"/>
</dbReference>
<dbReference type="SUPFAM" id="SSF52540">
    <property type="entry name" value="P-loop containing nucleoside triphosphate hydrolases"/>
    <property type="match status" value="1"/>
</dbReference>
<dbReference type="SUPFAM" id="SSF50447">
    <property type="entry name" value="Translation proteins"/>
    <property type="match status" value="1"/>
</dbReference>
<dbReference type="PROSITE" id="PS00301">
    <property type="entry name" value="G_TR_1"/>
    <property type="match status" value="1"/>
</dbReference>
<dbReference type="PROSITE" id="PS51722">
    <property type="entry name" value="G_TR_2"/>
    <property type="match status" value="1"/>
</dbReference>
<proteinExistence type="inferred from homology"/>
<protein>
    <recommendedName>
        <fullName evidence="2">Elongation factor Tu</fullName>
        <shortName evidence="2">EF-Tu</shortName>
        <ecNumber evidence="2">3.6.5.3</ecNumber>
    </recommendedName>
</protein>
<gene>
    <name evidence="2" type="primary">tuf</name>
    <name type="ordered locus">DvMF_1447</name>
</gene>